<keyword id="KW-0903">Direct protein sequencing</keyword>
<keyword id="KW-0808">Transferase</keyword>
<protein>
    <recommendedName>
        <fullName evidence="3">Sesamin methylene transferase</fullName>
        <ecNumber evidence="1">2.1.5.1</ecNumber>
    </recommendedName>
    <alternativeName>
        <fullName evidence="2">Sesamin-metabolizing enzyme</fullName>
    </alternativeName>
    <alternativeName>
        <fullName evidence="2">THF-dependent sesamin/sesamin-monocatechol methylenetransferase</fullName>
    </alternativeName>
</protein>
<reference key="1">
    <citation type="journal article" date="2016" name="Proc. Natl. Acad. Sci. U.S.A.">
        <title>Discovery of a sesamin-metabolizing microorganism and a new enzyme.</title>
        <authorList>
            <person name="Kumano T."/>
            <person name="Fujiki E."/>
            <person name="Hashimoto Y."/>
            <person name="Kobayashi M."/>
        </authorList>
    </citation>
    <scope>NUCLEOTIDE SEQUENCE [GENOMIC DNA]</scope>
    <scope>PROTEIN SEQUENCE OF 2-8</scope>
    <scope>FUNCTION</scope>
    <scope>CATALYTIC ACTIVITY</scope>
    <scope>BIOPHYSICOCHEMICAL PROPERTIES</scope>
    <scope>SUBUNIT</scope>
    <scope>INDUCTION</scope>
    <scope>MUTAGENESIS OF ASP-95; GLU-189 AND TYR-221</scope>
    <source>
        <strain>No.22</strain>
    </source>
</reference>
<comment type="function">
    <text evidence="1">Converts sesamin into sesamin mono- and di-catechol. Catalyzes a ring cleavage to transfer the methylene group to tetrahydrofolate (THF). Also active with (+)-episesamin, (-)-asarinin, sesaminol, (+)-sesamolin and piperine.</text>
</comment>
<comment type="catalytic activity">
    <reaction evidence="1">
        <text>(+)-sesamin + (6S)-5,6,7,8-tetrahydrofolyl-(gamma-L-Glu)(n) = (+)-sesamin monocatechol + (6R)-5,10-methylenetetrahydrofolyl-(gamma-L-Glu)(n)</text>
        <dbReference type="Rhea" id="RHEA:41011"/>
        <dbReference type="Rhea" id="RHEA-COMP:13257"/>
        <dbReference type="Rhea" id="RHEA-COMP:14738"/>
        <dbReference type="ChEBI" id="CHEBI:66470"/>
        <dbReference type="ChEBI" id="CHEBI:136542"/>
        <dbReference type="ChEBI" id="CHEBI:136572"/>
        <dbReference type="ChEBI" id="CHEBI:141005"/>
        <dbReference type="EC" id="2.1.5.1"/>
    </reaction>
</comment>
<comment type="catalytic activity">
    <reaction evidence="1">
        <text>(+)-sesamin monocatechol + (6S)-5,6,7,8-tetrahydrofolyl-(gamma-L-Glu)(n) = (+)-sesamin dicatechol + (6R)-5,10-methylenetetrahydrofolyl-(gamma-L-Glu)(n)</text>
        <dbReference type="Rhea" id="RHEA:52376"/>
        <dbReference type="Rhea" id="RHEA-COMP:13257"/>
        <dbReference type="Rhea" id="RHEA-COMP:14738"/>
        <dbReference type="ChEBI" id="CHEBI:136542"/>
        <dbReference type="ChEBI" id="CHEBI:136543"/>
        <dbReference type="ChEBI" id="CHEBI:136572"/>
        <dbReference type="ChEBI" id="CHEBI:141005"/>
        <dbReference type="EC" id="2.1.5.1"/>
    </reaction>
</comment>
<comment type="biophysicochemical properties">
    <kinetics>
        <KM evidence="1">0.032 mM for sesamin</KM>
        <Vmax evidence="1">9.3 umol/min/mg enzyme with sesamin as substrate</Vmax>
        <text evidence="1">kcat is 7.9 sec(-1) with sesamin as substrate.</text>
    </kinetics>
    <phDependence>
        <text evidence="1">Optimum pH is 7.5-8.5.</text>
    </phDependence>
    <temperatureDependence>
        <text evidence="1">Optimum temperature is below 40 degrees Celsius.</text>
    </temperatureDependence>
</comment>
<comment type="subunit">
    <text evidence="1">Homotrimer.</text>
</comment>
<comment type="induction">
    <text evidence="1">Expression is induced in the presence of sesamin.</text>
</comment>
<comment type="similarity">
    <text evidence="3">Belongs to the GcvT family.</text>
</comment>
<gene>
    <name evidence="2" type="primary">sesA</name>
</gene>
<proteinExistence type="evidence at protein level"/>
<feature type="initiator methionine" description="Removed" evidence="1">
    <location>
        <position position="1"/>
    </location>
</feature>
<feature type="chain" id="PRO_0000453263" description="Sesamin methylene transferase">
    <location>
        <begin position="2"/>
        <end position="452"/>
    </location>
</feature>
<feature type="mutagenesis site" description="60% decrease in activity." evidence="1">
    <original>D</original>
    <variation>A</variation>
    <location>
        <position position="95"/>
    </location>
</feature>
<feature type="mutagenesis site" description="Loss of activity." evidence="1">
    <original>E</original>
    <variation>A</variation>
    <location>
        <position position="189"/>
    </location>
</feature>
<feature type="mutagenesis site" description="Loss of activity." evidence="1">
    <original>Y</original>
    <variation>A</variation>
    <location>
        <position position="221"/>
    </location>
</feature>
<evidence type="ECO:0000269" key="1">
    <source>
    </source>
</evidence>
<evidence type="ECO:0000303" key="2">
    <source>
    </source>
</evidence>
<evidence type="ECO:0000305" key="3"/>
<sequence>MTAEQAINEGAFSLAASFGFVPLEYRGYEAEVLASKETAYIGTALNGAMSPIYDVTGPDALEFLRSVCINSFRGFQVGQIRHAVLCNDKGQILTDGVVARIDEDTYRTYWLAPALEYRLINSGLDVKGEDQSSNEFFFQLAGPRSLEVLEAAAHEDLHDIAFGRHRMSTIAGIPVRILRLGMAGGLAYEVHGAAADTETAYRAIWEAGQPFGLVKQGLNAYLMQHTEAGFPNINLHYPLPWYEDPDMAAFFDTRPTQNFYNKYRFFYGSVGPDAEARFVTPYQIGLGKMVDFNHDFIGKEALQREAEADHWAAVTLVWNEDDVADVVASKYRGRDVEPYDKIDDRPFDIYHNLGQPGFAYHADWVLADGERIGTSTGRINSVYYRRMISLGFIDKRHAAEGTELTVLWGRPGTPQKEIRVTVGRYPYFDLEKNNAIDVASIPRPALDVSAGA</sequence>
<organism>
    <name type="scientific">Sinomonas sp. (strain No.22)</name>
    <dbReference type="NCBI Taxonomy" id="1762963"/>
    <lineage>
        <taxon>Bacteria</taxon>
        <taxon>Bacillati</taxon>
        <taxon>Actinomycetota</taxon>
        <taxon>Actinomycetes</taxon>
        <taxon>Micrococcales</taxon>
        <taxon>Micrococcaceae</taxon>
        <taxon>Sinomonas</taxon>
    </lineage>
</organism>
<accession>A0A1J1EM40</accession>
<dbReference type="EC" id="2.1.5.1" evidence="1"/>
<dbReference type="EMBL" id="LC101493">
    <property type="protein sequence ID" value="BAW03116.1"/>
    <property type="molecule type" value="Genomic_DNA"/>
</dbReference>
<dbReference type="SMR" id="A0A1J1EM40"/>
<dbReference type="KEGG" id="ag:BAW03116"/>
<dbReference type="BRENDA" id="2.1.5.1">
    <property type="organism ID" value="15672"/>
</dbReference>
<dbReference type="GO" id="GO:0016740">
    <property type="term" value="F:transferase activity"/>
    <property type="evidence" value="ECO:0007669"/>
    <property type="project" value="UniProtKB-KW"/>
</dbReference>
<dbReference type="Gene3D" id="3.30.1360.120">
    <property type="entry name" value="Probable tRNA modification gtpase trme, domain 1"/>
    <property type="match status" value="1"/>
</dbReference>
<dbReference type="InterPro" id="IPR006222">
    <property type="entry name" value="GCV_T_N"/>
</dbReference>
<dbReference type="InterPro" id="IPR028896">
    <property type="entry name" value="GcvT/YgfZ/DmdA"/>
</dbReference>
<dbReference type="InterPro" id="IPR029043">
    <property type="entry name" value="GcvT/YgfZ_C"/>
</dbReference>
<dbReference type="InterPro" id="IPR027266">
    <property type="entry name" value="TrmE/GcvT_dom1"/>
</dbReference>
<dbReference type="PANTHER" id="PTHR43757">
    <property type="entry name" value="AMINOMETHYLTRANSFERASE"/>
    <property type="match status" value="1"/>
</dbReference>
<dbReference type="PANTHER" id="PTHR43757:SF2">
    <property type="entry name" value="AMINOMETHYLTRANSFERASE, MITOCHONDRIAL"/>
    <property type="match status" value="1"/>
</dbReference>
<dbReference type="Pfam" id="PF01571">
    <property type="entry name" value="GCV_T"/>
    <property type="match status" value="1"/>
</dbReference>
<dbReference type="SUPFAM" id="SSF101790">
    <property type="entry name" value="Aminomethyltransferase beta-barrel domain"/>
    <property type="match status" value="1"/>
</dbReference>
<dbReference type="SUPFAM" id="SSF103025">
    <property type="entry name" value="Folate-binding domain"/>
    <property type="match status" value="1"/>
</dbReference>
<name>SESA_SINX2</name>